<organism>
    <name type="scientific">Staphylococcus aureus (strain MRSA252)</name>
    <dbReference type="NCBI Taxonomy" id="282458"/>
    <lineage>
        <taxon>Bacteria</taxon>
        <taxon>Bacillati</taxon>
        <taxon>Bacillota</taxon>
        <taxon>Bacilli</taxon>
        <taxon>Bacillales</taxon>
        <taxon>Staphylococcaceae</taxon>
        <taxon>Staphylococcus</taxon>
    </lineage>
</organism>
<sequence>MSKEKVARFNKQHFVVGLKETLKALKKDQVTSLIIAEDVEVYLMTRVLSQINQKNIPVSFFKSKHALGKHVGINVNATIVALIK</sequence>
<dbReference type="EMBL" id="BX571856">
    <property type="protein sequence ID" value="CAG39570.1"/>
    <property type="status" value="ALT_INIT"/>
    <property type="molecule type" value="Genomic_DNA"/>
</dbReference>
<dbReference type="RefSeq" id="WP_000031892.1">
    <property type="nucleotide sequence ID" value="NC_002952.2"/>
</dbReference>
<dbReference type="SMR" id="Q6GJC4"/>
<dbReference type="KEGG" id="sar:SAR0549"/>
<dbReference type="HOGENOM" id="CLU_168063_0_0_9"/>
<dbReference type="Proteomes" id="UP000000596">
    <property type="component" value="Chromosome"/>
</dbReference>
<dbReference type="GO" id="GO:0003723">
    <property type="term" value="F:RNA binding"/>
    <property type="evidence" value="ECO:0007669"/>
    <property type="project" value="UniProtKB-UniRule"/>
</dbReference>
<dbReference type="Gene3D" id="3.30.1330.30">
    <property type="match status" value="1"/>
</dbReference>
<dbReference type="HAMAP" id="MF_00574">
    <property type="entry name" value="Ribosomal_eL8_Bact"/>
    <property type="match status" value="1"/>
</dbReference>
<dbReference type="InterPro" id="IPR029064">
    <property type="entry name" value="Ribosomal_eL30-like_sf"/>
</dbReference>
<dbReference type="InterPro" id="IPR004038">
    <property type="entry name" value="Ribosomal_eL8/eL30/eS12/Gad45"/>
</dbReference>
<dbReference type="InterPro" id="IPR023460">
    <property type="entry name" value="RNA_bf_YbxF-like"/>
</dbReference>
<dbReference type="NCBIfam" id="NF010123">
    <property type="entry name" value="PRK13600.1"/>
    <property type="match status" value="1"/>
</dbReference>
<dbReference type="Pfam" id="PF01248">
    <property type="entry name" value="Ribosomal_L7Ae"/>
    <property type="match status" value="1"/>
</dbReference>
<dbReference type="SUPFAM" id="SSF55315">
    <property type="entry name" value="L30e-like"/>
    <property type="match status" value="1"/>
</dbReference>
<keyword id="KW-0694">RNA-binding</keyword>
<feature type="chain" id="PRO_0000136818" description="RNA-binding protein SAR0549">
    <location>
        <begin position="1"/>
        <end position="84"/>
    </location>
</feature>
<evidence type="ECO:0000255" key="1">
    <source>
        <dbReference type="HAMAP-Rule" id="MF_00574"/>
    </source>
</evidence>
<evidence type="ECO:0000305" key="2"/>
<gene>
    <name type="ordered locus">SAR0549</name>
</gene>
<protein>
    <recommendedName>
        <fullName evidence="1">RNA-binding protein SAR0549</fullName>
    </recommendedName>
    <alternativeName>
        <fullName evidence="2">Putative ribosomal protein L7Ae-like</fullName>
    </alternativeName>
    <alternativeName>
        <fullName evidence="1">Ribosomal protein eL8-like</fullName>
    </alternativeName>
</protein>
<comment type="similarity">
    <text evidence="1">Belongs to the eukaryotic ribosomal protein eL8 family.</text>
</comment>
<comment type="sequence caution" evidence="2">
    <conflict type="erroneous initiation">
        <sequence resource="EMBL-CDS" id="CAG39570"/>
    </conflict>
    <text>Extended N-terminus.</text>
</comment>
<name>RXL7_STAAR</name>
<reference key="1">
    <citation type="journal article" date="2004" name="Proc. Natl. Acad. Sci. U.S.A.">
        <title>Complete genomes of two clinical Staphylococcus aureus strains: evidence for the rapid evolution of virulence and drug resistance.</title>
        <authorList>
            <person name="Holden M.T.G."/>
            <person name="Feil E.J."/>
            <person name="Lindsay J.A."/>
            <person name="Peacock S.J."/>
            <person name="Day N.P.J."/>
            <person name="Enright M.C."/>
            <person name="Foster T.J."/>
            <person name="Moore C.E."/>
            <person name="Hurst L."/>
            <person name="Atkin R."/>
            <person name="Barron A."/>
            <person name="Bason N."/>
            <person name="Bentley S.D."/>
            <person name="Chillingworth C."/>
            <person name="Chillingworth T."/>
            <person name="Churcher C."/>
            <person name="Clark L."/>
            <person name="Corton C."/>
            <person name="Cronin A."/>
            <person name="Doggett J."/>
            <person name="Dowd L."/>
            <person name="Feltwell T."/>
            <person name="Hance Z."/>
            <person name="Harris B."/>
            <person name="Hauser H."/>
            <person name="Holroyd S."/>
            <person name="Jagels K."/>
            <person name="James K.D."/>
            <person name="Lennard N."/>
            <person name="Line A."/>
            <person name="Mayes R."/>
            <person name="Moule S."/>
            <person name="Mungall K."/>
            <person name="Ormond D."/>
            <person name="Quail M.A."/>
            <person name="Rabbinowitsch E."/>
            <person name="Rutherford K.M."/>
            <person name="Sanders M."/>
            <person name="Sharp S."/>
            <person name="Simmonds M."/>
            <person name="Stevens K."/>
            <person name="Whitehead S."/>
            <person name="Barrell B.G."/>
            <person name="Spratt B.G."/>
            <person name="Parkhill J."/>
        </authorList>
    </citation>
    <scope>NUCLEOTIDE SEQUENCE [LARGE SCALE GENOMIC DNA]</scope>
    <source>
        <strain>MRSA252</strain>
    </source>
</reference>
<accession>Q6GJC4</accession>
<proteinExistence type="inferred from homology"/>